<evidence type="ECO:0000255" key="1">
    <source>
        <dbReference type="HAMAP-Rule" id="MF_01307"/>
    </source>
</evidence>
<evidence type="ECO:0000256" key="2">
    <source>
        <dbReference type="SAM" id="MobiDB-lite"/>
    </source>
</evidence>
<evidence type="ECO:0000305" key="3"/>
<organism>
    <name type="scientific">Leifsonia xyli subsp. xyli (strain CTCB07)</name>
    <dbReference type="NCBI Taxonomy" id="281090"/>
    <lineage>
        <taxon>Bacteria</taxon>
        <taxon>Bacillati</taxon>
        <taxon>Actinomycetota</taxon>
        <taxon>Actinomycetes</taxon>
        <taxon>Micrococcales</taxon>
        <taxon>Microbacteriaceae</taxon>
        <taxon>Leifsonia</taxon>
    </lineage>
</organism>
<reference key="1">
    <citation type="journal article" date="2004" name="Mol. Plant Microbe Interact.">
        <title>The genome sequence of the Gram-positive sugarcane pathogen Leifsonia xyli subsp. xyli.</title>
        <authorList>
            <person name="Monteiro-Vitorello C.B."/>
            <person name="Camargo L.E.A."/>
            <person name="Van Sluys M.A."/>
            <person name="Kitajima J.P."/>
            <person name="Truffi D."/>
            <person name="do Amaral A.M."/>
            <person name="Harakava R."/>
            <person name="de Oliveira J.C.F."/>
            <person name="Wood D."/>
            <person name="de Oliveira M.C."/>
            <person name="Miyaki C.Y."/>
            <person name="Takita M.A."/>
            <person name="da Silva A.C.R."/>
            <person name="Furlan L.R."/>
            <person name="Carraro D.M."/>
            <person name="Camarotte G."/>
            <person name="Almeida N.F. Jr."/>
            <person name="Carrer H."/>
            <person name="Coutinho L.L."/>
            <person name="El-Dorry H.A."/>
            <person name="Ferro M.I.T."/>
            <person name="Gagliardi P.R."/>
            <person name="Giglioti E."/>
            <person name="Goldman M.H.S."/>
            <person name="Goldman G.H."/>
            <person name="Kimura E.T."/>
            <person name="Ferro E.S."/>
            <person name="Kuramae E.E."/>
            <person name="Lemos E.G.M."/>
            <person name="Lemos M.V.F."/>
            <person name="Mauro S.M.Z."/>
            <person name="Machado M.A."/>
            <person name="Marino C.L."/>
            <person name="Menck C.F."/>
            <person name="Nunes L.R."/>
            <person name="Oliveira R.C."/>
            <person name="Pereira G.G."/>
            <person name="Siqueira W."/>
            <person name="de Souza A.A."/>
            <person name="Tsai S.M."/>
            <person name="Zanca A.S."/>
            <person name="Simpson A.J.G."/>
            <person name="Brumbley S.M."/>
            <person name="Setubal J.C."/>
        </authorList>
    </citation>
    <scope>NUCLEOTIDE SEQUENCE [LARGE SCALE GENOMIC DNA]</scope>
    <source>
        <strain>CTCB07</strain>
    </source>
</reference>
<name>RS5_LEIXX</name>
<comment type="function">
    <text evidence="1">With S4 and S12 plays an important role in translational accuracy.</text>
</comment>
<comment type="function">
    <text evidence="1">Located at the back of the 30S subunit body where it stabilizes the conformation of the head with respect to the body.</text>
</comment>
<comment type="subunit">
    <text evidence="1">Part of the 30S ribosomal subunit. Contacts proteins S4 and S8.</text>
</comment>
<comment type="domain">
    <text>The N-terminal domain interacts with the head of the 30S subunit; the C-terminal domain interacts with the body and contacts protein S4. The interaction surface between S4 and S5 is involved in control of translational fidelity.</text>
</comment>
<comment type="similarity">
    <text evidence="1">Belongs to the universal ribosomal protein uS5 family.</text>
</comment>
<feature type="chain" id="PRO_0000131535" description="Small ribosomal subunit protein uS5">
    <location>
        <begin position="1"/>
        <end position="232"/>
    </location>
</feature>
<feature type="domain" description="S5 DRBM" evidence="1">
    <location>
        <begin position="50"/>
        <end position="113"/>
    </location>
</feature>
<feature type="region of interest" description="Disordered" evidence="2">
    <location>
        <begin position="1"/>
        <end position="47"/>
    </location>
</feature>
<feature type="compositionally biased region" description="Polar residues" evidence="2">
    <location>
        <begin position="7"/>
        <end position="19"/>
    </location>
</feature>
<feature type="compositionally biased region" description="Basic and acidic residues" evidence="2">
    <location>
        <begin position="20"/>
        <end position="47"/>
    </location>
</feature>
<gene>
    <name evidence="1" type="primary">rpsE</name>
    <name type="ordered locus">Lxx20170</name>
</gene>
<keyword id="KW-1185">Reference proteome</keyword>
<keyword id="KW-0687">Ribonucleoprotein</keyword>
<keyword id="KW-0689">Ribosomal protein</keyword>
<keyword id="KW-0694">RNA-binding</keyword>
<keyword id="KW-0699">rRNA-binding</keyword>
<protein>
    <recommendedName>
        <fullName evidence="1">Small ribosomal subunit protein uS5</fullName>
    </recommendedName>
    <alternativeName>
        <fullName evidence="3">30S ribosomal protein S5</fullName>
    </alternativeName>
</protein>
<sequence length="232" mass="24453">MAAEVTETAQPVETAASTDNNREQREPRRGGRERNPNRDRGNRDADKSQFLERVVTINRVSKVVKGGRRFSFTALVVVGDGNGLVGVGYGKAREVPLAISKGVEEAKKNFFRVPRVANTIPHPVQGEAAAGVVLLRPAAAGTGVIAGGPVRAVLECAGIHDVLSKSLGSSNTINIVHATVEALQQLEEPRAVAARRGLDYDRVAPEKLLQIEARAAEAAAAAKKAGAEKVGA</sequence>
<accession>Q6AD11</accession>
<proteinExistence type="inferred from homology"/>
<dbReference type="EMBL" id="AE016822">
    <property type="protein sequence ID" value="AAT89733.1"/>
    <property type="molecule type" value="Genomic_DNA"/>
</dbReference>
<dbReference type="SMR" id="Q6AD11"/>
<dbReference type="STRING" id="281090.Lxx20170"/>
<dbReference type="KEGG" id="lxx:Lxx20170"/>
<dbReference type="eggNOG" id="COG0098">
    <property type="taxonomic scope" value="Bacteria"/>
</dbReference>
<dbReference type="HOGENOM" id="CLU_065898_2_1_11"/>
<dbReference type="Proteomes" id="UP000001306">
    <property type="component" value="Chromosome"/>
</dbReference>
<dbReference type="GO" id="GO:0015935">
    <property type="term" value="C:small ribosomal subunit"/>
    <property type="evidence" value="ECO:0007669"/>
    <property type="project" value="InterPro"/>
</dbReference>
<dbReference type="GO" id="GO:0019843">
    <property type="term" value="F:rRNA binding"/>
    <property type="evidence" value="ECO:0007669"/>
    <property type="project" value="UniProtKB-UniRule"/>
</dbReference>
<dbReference type="GO" id="GO:0003735">
    <property type="term" value="F:structural constituent of ribosome"/>
    <property type="evidence" value="ECO:0007669"/>
    <property type="project" value="InterPro"/>
</dbReference>
<dbReference type="GO" id="GO:0006412">
    <property type="term" value="P:translation"/>
    <property type="evidence" value="ECO:0007669"/>
    <property type="project" value="UniProtKB-UniRule"/>
</dbReference>
<dbReference type="FunFam" id="3.30.160.20:FF:000001">
    <property type="entry name" value="30S ribosomal protein S5"/>
    <property type="match status" value="1"/>
</dbReference>
<dbReference type="FunFam" id="3.30.230.10:FF:000002">
    <property type="entry name" value="30S ribosomal protein S5"/>
    <property type="match status" value="1"/>
</dbReference>
<dbReference type="Gene3D" id="3.30.160.20">
    <property type="match status" value="1"/>
</dbReference>
<dbReference type="Gene3D" id="3.30.230.10">
    <property type="match status" value="1"/>
</dbReference>
<dbReference type="HAMAP" id="MF_01307_B">
    <property type="entry name" value="Ribosomal_uS5_B"/>
    <property type="match status" value="1"/>
</dbReference>
<dbReference type="InterPro" id="IPR020568">
    <property type="entry name" value="Ribosomal_Su5_D2-typ_SF"/>
</dbReference>
<dbReference type="InterPro" id="IPR000851">
    <property type="entry name" value="Ribosomal_uS5"/>
</dbReference>
<dbReference type="InterPro" id="IPR005712">
    <property type="entry name" value="Ribosomal_uS5_bac-type"/>
</dbReference>
<dbReference type="InterPro" id="IPR005324">
    <property type="entry name" value="Ribosomal_uS5_C"/>
</dbReference>
<dbReference type="InterPro" id="IPR013810">
    <property type="entry name" value="Ribosomal_uS5_N"/>
</dbReference>
<dbReference type="InterPro" id="IPR018192">
    <property type="entry name" value="Ribosomal_uS5_N_CS"/>
</dbReference>
<dbReference type="InterPro" id="IPR014721">
    <property type="entry name" value="Ribsml_uS5_D2-typ_fold_subgr"/>
</dbReference>
<dbReference type="NCBIfam" id="TIGR01021">
    <property type="entry name" value="rpsE_bact"/>
    <property type="match status" value="1"/>
</dbReference>
<dbReference type="PANTHER" id="PTHR48277">
    <property type="entry name" value="MITOCHONDRIAL RIBOSOMAL PROTEIN S5"/>
    <property type="match status" value="1"/>
</dbReference>
<dbReference type="PANTHER" id="PTHR48277:SF1">
    <property type="entry name" value="MITOCHONDRIAL RIBOSOMAL PROTEIN S5"/>
    <property type="match status" value="1"/>
</dbReference>
<dbReference type="Pfam" id="PF00333">
    <property type="entry name" value="Ribosomal_S5"/>
    <property type="match status" value="1"/>
</dbReference>
<dbReference type="Pfam" id="PF03719">
    <property type="entry name" value="Ribosomal_S5_C"/>
    <property type="match status" value="1"/>
</dbReference>
<dbReference type="SUPFAM" id="SSF54768">
    <property type="entry name" value="dsRNA-binding domain-like"/>
    <property type="match status" value="1"/>
</dbReference>
<dbReference type="SUPFAM" id="SSF54211">
    <property type="entry name" value="Ribosomal protein S5 domain 2-like"/>
    <property type="match status" value="1"/>
</dbReference>
<dbReference type="PROSITE" id="PS00585">
    <property type="entry name" value="RIBOSOMAL_S5"/>
    <property type="match status" value="1"/>
</dbReference>
<dbReference type="PROSITE" id="PS50881">
    <property type="entry name" value="S5_DSRBD"/>
    <property type="match status" value="1"/>
</dbReference>